<keyword id="KW-0067">ATP-binding</keyword>
<keyword id="KW-0963">Cytoplasm</keyword>
<keyword id="KW-0418">Kinase</keyword>
<keyword id="KW-0460">Magnesium</keyword>
<keyword id="KW-0479">Metal-binding</keyword>
<keyword id="KW-0546">Nucleotide metabolism</keyword>
<keyword id="KW-0547">Nucleotide-binding</keyword>
<keyword id="KW-0597">Phosphoprotein</keyword>
<keyword id="KW-1185">Reference proteome</keyword>
<keyword id="KW-0808">Transferase</keyword>
<protein>
    <recommendedName>
        <fullName evidence="1">Nucleoside diphosphate kinase</fullName>
        <shortName evidence="1">NDK</shortName>
        <shortName evidence="1">NDP kinase</shortName>
        <ecNumber evidence="1">2.7.4.6</ecNumber>
    </recommendedName>
    <alternativeName>
        <fullName evidence="1">Nucleoside-2-P kinase</fullName>
    </alternativeName>
</protein>
<proteinExistence type="inferred from homology"/>
<feature type="chain" id="PRO_1000026207" description="Nucleoside diphosphate kinase">
    <location>
        <begin position="1"/>
        <end position="141"/>
    </location>
</feature>
<feature type="active site" description="Pros-phosphohistidine intermediate" evidence="1">
    <location>
        <position position="117"/>
    </location>
</feature>
<feature type="binding site" evidence="1">
    <location>
        <position position="11"/>
    </location>
    <ligand>
        <name>ATP</name>
        <dbReference type="ChEBI" id="CHEBI:30616"/>
    </ligand>
</feature>
<feature type="binding site" evidence="1">
    <location>
        <position position="59"/>
    </location>
    <ligand>
        <name>ATP</name>
        <dbReference type="ChEBI" id="CHEBI:30616"/>
    </ligand>
</feature>
<feature type="binding site" evidence="1">
    <location>
        <position position="87"/>
    </location>
    <ligand>
        <name>ATP</name>
        <dbReference type="ChEBI" id="CHEBI:30616"/>
    </ligand>
</feature>
<feature type="binding site" evidence="1">
    <location>
        <position position="93"/>
    </location>
    <ligand>
        <name>ATP</name>
        <dbReference type="ChEBI" id="CHEBI:30616"/>
    </ligand>
</feature>
<feature type="binding site" evidence="1">
    <location>
        <position position="104"/>
    </location>
    <ligand>
        <name>ATP</name>
        <dbReference type="ChEBI" id="CHEBI:30616"/>
    </ligand>
</feature>
<feature type="binding site" evidence="1">
    <location>
        <position position="114"/>
    </location>
    <ligand>
        <name>ATP</name>
        <dbReference type="ChEBI" id="CHEBI:30616"/>
    </ligand>
</feature>
<reference key="1">
    <citation type="journal article" date="2006" name="Nat. Biotechnol.">
        <title>Complete genome of the mutualistic, N2-fixing grass endophyte Azoarcus sp. strain BH72.</title>
        <authorList>
            <person name="Krause A."/>
            <person name="Ramakumar A."/>
            <person name="Bartels D."/>
            <person name="Battistoni F."/>
            <person name="Bekel T."/>
            <person name="Boch J."/>
            <person name="Boehm M."/>
            <person name="Friedrich F."/>
            <person name="Hurek T."/>
            <person name="Krause L."/>
            <person name="Linke B."/>
            <person name="McHardy A.C."/>
            <person name="Sarkar A."/>
            <person name="Schneiker S."/>
            <person name="Syed A.A."/>
            <person name="Thauer R."/>
            <person name="Vorhoelter F.-J."/>
            <person name="Weidner S."/>
            <person name="Puehler A."/>
            <person name="Reinhold-Hurek B."/>
            <person name="Kaiser O."/>
            <person name="Goesmann A."/>
        </authorList>
    </citation>
    <scope>NUCLEOTIDE SEQUENCE [LARGE SCALE GENOMIC DNA]</scope>
    <source>
        <strain>BH72</strain>
    </source>
</reference>
<name>NDK_AZOSB</name>
<comment type="function">
    <text evidence="1">Major role in the synthesis of nucleoside triphosphates other than ATP. The ATP gamma phosphate is transferred to the NDP beta phosphate via a ping-pong mechanism, using a phosphorylated active-site intermediate.</text>
</comment>
<comment type="catalytic activity">
    <reaction evidence="1">
        <text>a 2'-deoxyribonucleoside 5'-diphosphate + ATP = a 2'-deoxyribonucleoside 5'-triphosphate + ADP</text>
        <dbReference type="Rhea" id="RHEA:44640"/>
        <dbReference type="ChEBI" id="CHEBI:30616"/>
        <dbReference type="ChEBI" id="CHEBI:61560"/>
        <dbReference type="ChEBI" id="CHEBI:73316"/>
        <dbReference type="ChEBI" id="CHEBI:456216"/>
        <dbReference type="EC" id="2.7.4.6"/>
    </reaction>
</comment>
<comment type="catalytic activity">
    <reaction evidence="1">
        <text>a ribonucleoside 5'-diphosphate + ATP = a ribonucleoside 5'-triphosphate + ADP</text>
        <dbReference type="Rhea" id="RHEA:18113"/>
        <dbReference type="ChEBI" id="CHEBI:30616"/>
        <dbReference type="ChEBI" id="CHEBI:57930"/>
        <dbReference type="ChEBI" id="CHEBI:61557"/>
        <dbReference type="ChEBI" id="CHEBI:456216"/>
        <dbReference type="EC" id="2.7.4.6"/>
    </reaction>
</comment>
<comment type="cofactor">
    <cofactor evidence="1">
        <name>Mg(2+)</name>
        <dbReference type="ChEBI" id="CHEBI:18420"/>
    </cofactor>
</comment>
<comment type="subunit">
    <text evidence="1">Homotetramer.</text>
</comment>
<comment type="subcellular location">
    <subcellularLocation>
        <location evidence="1">Cytoplasm</location>
    </subcellularLocation>
</comment>
<comment type="similarity">
    <text evidence="1">Belongs to the NDK family.</text>
</comment>
<dbReference type="EC" id="2.7.4.6" evidence="1"/>
<dbReference type="EMBL" id="AM406670">
    <property type="protein sequence ID" value="CAL93540.1"/>
    <property type="molecule type" value="Genomic_DNA"/>
</dbReference>
<dbReference type="RefSeq" id="WP_011764657.1">
    <property type="nucleotide sequence ID" value="NC_008702.1"/>
</dbReference>
<dbReference type="SMR" id="A1K3Y5"/>
<dbReference type="STRING" id="62928.azo0923"/>
<dbReference type="KEGG" id="aoa:dqs_0995"/>
<dbReference type="KEGG" id="azo:azo0923"/>
<dbReference type="eggNOG" id="COG0105">
    <property type="taxonomic scope" value="Bacteria"/>
</dbReference>
<dbReference type="HOGENOM" id="CLU_060216_8_1_4"/>
<dbReference type="OrthoDB" id="9801161at2"/>
<dbReference type="Proteomes" id="UP000002588">
    <property type="component" value="Chromosome"/>
</dbReference>
<dbReference type="GO" id="GO:0005737">
    <property type="term" value="C:cytoplasm"/>
    <property type="evidence" value="ECO:0007669"/>
    <property type="project" value="UniProtKB-SubCell"/>
</dbReference>
<dbReference type="GO" id="GO:0005524">
    <property type="term" value="F:ATP binding"/>
    <property type="evidence" value="ECO:0007669"/>
    <property type="project" value="UniProtKB-UniRule"/>
</dbReference>
<dbReference type="GO" id="GO:0046872">
    <property type="term" value="F:metal ion binding"/>
    <property type="evidence" value="ECO:0007669"/>
    <property type="project" value="UniProtKB-KW"/>
</dbReference>
<dbReference type="GO" id="GO:0004550">
    <property type="term" value="F:nucleoside diphosphate kinase activity"/>
    <property type="evidence" value="ECO:0007669"/>
    <property type="project" value="UniProtKB-UniRule"/>
</dbReference>
<dbReference type="GO" id="GO:0006241">
    <property type="term" value="P:CTP biosynthetic process"/>
    <property type="evidence" value="ECO:0007669"/>
    <property type="project" value="UniProtKB-UniRule"/>
</dbReference>
<dbReference type="GO" id="GO:0006183">
    <property type="term" value="P:GTP biosynthetic process"/>
    <property type="evidence" value="ECO:0007669"/>
    <property type="project" value="UniProtKB-UniRule"/>
</dbReference>
<dbReference type="GO" id="GO:0006228">
    <property type="term" value="P:UTP biosynthetic process"/>
    <property type="evidence" value="ECO:0007669"/>
    <property type="project" value="UniProtKB-UniRule"/>
</dbReference>
<dbReference type="CDD" id="cd04413">
    <property type="entry name" value="NDPk_I"/>
    <property type="match status" value="1"/>
</dbReference>
<dbReference type="FunFam" id="3.30.70.141:FF:000001">
    <property type="entry name" value="Nucleoside diphosphate kinase"/>
    <property type="match status" value="1"/>
</dbReference>
<dbReference type="Gene3D" id="3.30.70.141">
    <property type="entry name" value="Nucleoside diphosphate kinase-like domain"/>
    <property type="match status" value="1"/>
</dbReference>
<dbReference type="HAMAP" id="MF_00451">
    <property type="entry name" value="NDP_kinase"/>
    <property type="match status" value="1"/>
</dbReference>
<dbReference type="InterPro" id="IPR034907">
    <property type="entry name" value="NDK-like_dom"/>
</dbReference>
<dbReference type="InterPro" id="IPR036850">
    <property type="entry name" value="NDK-like_dom_sf"/>
</dbReference>
<dbReference type="InterPro" id="IPR001564">
    <property type="entry name" value="Nucleoside_diP_kinase"/>
</dbReference>
<dbReference type="InterPro" id="IPR023005">
    <property type="entry name" value="Nucleoside_diP_kinase_AS"/>
</dbReference>
<dbReference type="NCBIfam" id="NF001908">
    <property type="entry name" value="PRK00668.1"/>
    <property type="match status" value="1"/>
</dbReference>
<dbReference type="PANTHER" id="PTHR46161">
    <property type="entry name" value="NUCLEOSIDE DIPHOSPHATE KINASE"/>
    <property type="match status" value="1"/>
</dbReference>
<dbReference type="PANTHER" id="PTHR46161:SF3">
    <property type="entry name" value="NUCLEOSIDE DIPHOSPHATE KINASE DDB_G0292928-RELATED"/>
    <property type="match status" value="1"/>
</dbReference>
<dbReference type="Pfam" id="PF00334">
    <property type="entry name" value="NDK"/>
    <property type="match status" value="1"/>
</dbReference>
<dbReference type="PRINTS" id="PR01243">
    <property type="entry name" value="NUCDPKINASE"/>
</dbReference>
<dbReference type="SMART" id="SM00562">
    <property type="entry name" value="NDK"/>
    <property type="match status" value="1"/>
</dbReference>
<dbReference type="SUPFAM" id="SSF54919">
    <property type="entry name" value="Nucleoside diphosphate kinase, NDK"/>
    <property type="match status" value="1"/>
</dbReference>
<dbReference type="PROSITE" id="PS00469">
    <property type="entry name" value="NDPK"/>
    <property type="match status" value="1"/>
</dbReference>
<dbReference type="PROSITE" id="PS51374">
    <property type="entry name" value="NDPK_LIKE"/>
    <property type="match status" value="1"/>
</dbReference>
<accession>A1K3Y5</accession>
<evidence type="ECO:0000255" key="1">
    <source>
        <dbReference type="HAMAP-Rule" id="MF_00451"/>
    </source>
</evidence>
<gene>
    <name evidence="1" type="primary">ndk</name>
    <name type="ordered locus">azo0923</name>
</gene>
<organism>
    <name type="scientific">Azoarcus sp. (strain BH72)</name>
    <dbReference type="NCBI Taxonomy" id="418699"/>
    <lineage>
        <taxon>Bacteria</taxon>
        <taxon>Pseudomonadati</taxon>
        <taxon>Pseudomonadota</taxon>
        <taxon>Betaproteobacteria</taxon>
        <taxon>Rhodocyclales</taxon>
        <taxon>Zoogloeaceae</taxon>
        <taxon>Azoarcus</taxon>
    </lineage>
</organism>
<sequence>MAIERTLSIIKPDAVAKNVIGKIYQRFEDAGLKIIAAKMVHLSEQEAGQFYAVHKERPFYKDLVSFMTSGPVMIQCLEGENAIAKNRELMGATDPKKADAGTIRADFADSIDANAVHGSDAPETAAVEVAFFFPGMNVYSR</sequence>